<dbReference type="EMBL" id="AF148805">
    <property type="protein sequence ID" value="ABD28851.1"/>
    <property type="molecule type" value="Genomic_DNA"/>
</dbReference>
<dbReference type="RefSeq" id="YP_001129354.1">
    <property type="nucleotide sequence ID" value="NC_009333.1"/>
</dbReference>
<dbReference type="PDB" id="8Y48">
    <property type="method" value="EM"/>
    <property type="resolution" value="3.26 A"/>
    <property type="chains" value="A/B/C=1-653"/>
</dbReference>
<dbReference type="PDB" id="9CU4">
    <property type="method" value="EM"/>
    <property type="resolution" value="3.30 A"/>
    <property type="chains" value="A/B/C=54-677"/>
</dbReference>
<dbReference type="PDBsum" id="8Y48"/>
<dbReference type="PDBsum" id="9CU4"/>
<dbReference type="EMDB" id="EMD-38910"/>
<dbReference type="SMR" id="F5HB81"/>
<dbReference type="BioGRID" id="1777004">
    <property type="interactions" value="2"/>
</dbReference>
<dbReference type="IntAct" id="F5HB81">
    <property type="interactions" value="1"/>
</dbReference>
<dbReference type="GlyCosmos" id="F5HB81">
    <property type="glycosylation" value="13 sites, No reported glycans"/>
</dbReference>
<dbReference type="DNASU" id="4961501"/>
<dbReference type="GeneID" id="4961501"/>
<dbReference type="KEGG" id="vg:4961501"/>
<dbReference type="Proteomes" id="UP000000942">
    <property type="component" value="Segment"/>
</dbReference>
<dbReference type="GO" id="GO:0044175">
    <property type="term" value="C:host cell endosome membrane"/>
    <property type="evidence" value="ECO:0007669"/>
    <property type="project" value="UniProtKB-SubCell"/>
</dbReference>
<dbReference type="GO" id="GO:0044178">
    <property type="term" value="C:host cell Golgi membrane"/>
    <property type="evidence" value="ECO:0007669"/>
    <property type="project" value="UniProtKB-SubCell"/>
</dbReference>
<dbReference type="GO" id="GO:0020002">
    <property type="term" value="C:host cell plasma membrane"/>
    <property type="evidence" value="ECO:0007669"/>
    <property type="project" value="UniProtKB-SubCell"/>
</dbReference>
<dbReference type="GO" id="GO:0016020">
    <property type="term" value="C:membrane"/>
    <property type="evidence" value="ECO:0007669"/>
    <property type="project" value="UniProtKB-KW"/>
</dbReference>
<dbReference type="GO" id="GO:0019031">
    <property type="term" value="C:viral envelope"/>
    <property type="evidence" value="ECO:0000314"/>
    <property type="project" value="CACAO"/>
</dbReference>
<dbReference type="GO" id="GO:0055036">
    <property type="term" value="C:virion membrane"/>
    <property type="evidence" value="ECO:0007669"/>
    <property type="project" value="UniProtKB-SubCell"/>
</dbReference>
<dbReference type="GO" id="GO:0046718">
    <property type="term" value="P:symbiont entry into host cell"/>
    <property type="evidence" value="ECO:0007669"/>
    <property type="project" value="UniProtKB-KW"/>
</dbReference>
<dbReference type="GO" id="GO:0019062">
    <property type="term" value="P:virion attachment to host cell"/>
    <property type="evidence" value="ECO:0007669"/>
    <property type="project" value="UniProtKB-KW"/>
</dbReference>
<dbReference type="Gene3D" id="1.20.5.1890">
    <property type="match status" value="1"/>
</dbReference>
<dbReference type="Gene3D" id="2.30.29.100">
    <property type="match status" value="2"/>
</dbReference>
<dbReference type="Gene3D" id="2.30.30.1230">
    <property type="match status" value="1"/>
</dbReference>
<dbReference type="Gene3D" id="6.10.250.3280">
    <property type="match status" value="1"/>
</dbReference>
<dbReference type="HAMAP" id="MF_04032">
    <property type="entry name" value="HSV_GB"/>
    <property type="match status" value="1"/>
</dbReference>
<dbReference type="InterPro" id="IPR035377">
    <property type="entry name" value="Glycoprot_B_PH1"/>
</dbReference>
<dbReference type="InterPro" id="IPR035381">
    <property type="entry name" value="Glycoprot_B_PH2"/>
</dbReference>
<dbReference type="InterPro" id="IPR038631">
    <property type="entry name" value="Glycoprot_B_PH2_sf"/>
</dbReference>
<dbReference type="InterPro" id="IPR055341">
    <property type="entry name" value="Glycoprotein_B_ecto_C"/>
</dbReference>
<dbReference type="InterPro" id="IPR000234">
    <property type="entry name" value="Herpes_Glycoprot_B"/>
</dbReference>
<dbReference type="Pfam" id="PF17416">
    <property type="entry name" value="Glycoprot_B_PH1"/>
    <property type="match status" value="1"/>
</dbReference>
<dbReference type="Pfam" id="PF17417">
    <property type="entry name" value="Glycoprot_B_PH2"/>
    <property type="match status" value="1"/>
</dbReference>
<dbReference type="Pfam" id="PF00606">
    <property type="entry name" value="Glycoprotein_B"/>
    <property type="match status" value="1"/>
</dbReference>
<dbReference type="SUPFAM" id="SSF161008">
    <property type="entry name" value="Viral glycoprotein ectodomain-like"/>
    <property type="match status" value="1"/>
</dbReference>
<evidence type="ECO:0000250" key="1"/>
<evidence type="ECO:0000255" key="2">
    <source>
        <dbReference type="HAMAP-Rule" id="MF_04032"/>
    </source>
</evidence>
<evidence type="ECO:0000256" key="3">
    <source>
        <dbReference type="SAM" id="MobiDB-lite"/>
    </source>
</evidence>
<evidence type="ECO:0000269" key="4">
    <source>
    </source>
</evidence>
<evidence type="ECO:0000269" key="5">
    <source>
    </source>
</evidence>
<evidence type="ECO:0000269" key="6">
    <source>
    </source>
</evidence>
<gene>
    <name evidence="2" type="primary">gB</name>
    <name type="synonym">ORF8</name>
</gene>
<feature type="signal peptide" evidence="2">
    <location>
        <begin position="1"/>
        <end position="26"/>
    </location>
</feature>
<feature type="chain" id="PRO_0000423905" description="Envelope glycoprotein B" evidence="2">
    <location>
        <begin position="27"/>
        <end position="845"/>
    </location>
</feature>
<feature type="topological domain" description="Virion surface" evidence="2">
    <location>
        <begin position="27"/>
        <end position="732"/>
    </location>
</feature>
<feature type="transmembrane region" description="Helical" evidence="2">
    <location>
        <begin position="733"/>
        <end position="753"/>
    </location>
</feature>
<feature type="topological domain" description="Intravirion" evidence="2">
    <location>
        <begin position="754"/>
        <end position="845"/>
    </location>
</feature>
<feature type="region of interest" description="Disordered" evidence="3">
    <location>
        <begin position="29"/>
        <end position="57"/>
    </location>
</feature>
<feature type="region of interest" description="Involved in fusion and/or binding to host membrane" evidence="2">
    <location>
        <begin position="124"/>
        <end position="130"/>
    </location>
</feature>
<feature type="region of interest" description="Involved in fusion and/or binding to host membrane" evidence="2">
    <location>
        <begin position="208"/>
        <end position="216"/>
    </location>
</feature>
<feature type="region of interest" description="Disordered" evidence="3">
    <location>
        <begin position="411"/>
        <end position="451"/>
    </location>
</feature>
<feature type="region of interest" description="Hydrophobic membrane proximal region" evidence="2">
    <location>
        <begin position="678"/>
        <end position="730"/>
    </location>
</feature>
<feature type="region of interest" description="Disordered" evidence="3">
    <location>
        <begin position="802"/>
        <end position="845"/>
    </location>
</feature>
<feature type="short sequence motif" description="Internalization motif" evidence="2">
    <location>
        <begin position="830"/>
        <end position="833"/>
    </location>
</feature>
<feature type="compositionally biased region" description="Low complexity" evidence="3">
    <location>
        <begin position="33"/>
        <end position="49"/>
    </location>
</feature>
<feature type="compositionally biased region" description="Polar residues" evidence="3">
    <location>
        <begin position="811"/>
        <end position="822"/>
    </location>
</feature>
<feature type="glycosylation site" description="N-linked (GlcNAc...) asparagine; by host" evidence="2">
    <location>
        <position position="179"/>
    </location>
</feature>
<feature type="glycosylation site" description="N-linked (GlcNAc...) asparagine; by host" evidence="2">
    <location>
        <position position="254"/>
    </location>
</feature>
<feature type="glycosylation site" description="N-linked (GlcNAc...) asparagine; by host" evidence="2">
    <location>
        <position position="275"/>
    </location>
</feature>
<feature type="glycosylation site" description="N-linked (GlcNAc...) asparagine; by host" evidence="2">
    <location>
        <position position="355"/>
    </location>
</feature>
<feature type="glycosylation site" description="N-linked (GlcNAc...) asparagine; by host" evidence="2">
    <location>
        <position position="368"/>
    </location>
</feature>
<feature type="glycosylation site" description="N-linked (GlcNAc...) asparagine; by host" evidence="2">
    <location>
        <position position="372"/>
    </location>
</feature>
<feature type="glycosylation site" description="N-linked (GlcNAc...) asparagine; by host" evidence="2">
    <location>
        <position position="385"/>
    </location>
</feature>
<feature type="glycosylation site" description="N-linked (GlcNAc...) asparagine; by host" evidence="2">
    <location>
        <position position="408"/>
    </location>
</feature>
<feature type="glycosylation site" description="N-linked (GlcNAc...) asparagine; by host" evidence="2">
    <location>
        <position position="455"/>
    </location>
</feature>
<feature type="glycosylation site" description="N-linked (GlcNAc...) asparagine; by host" evidence="2">
    <location>
        <position position="562"/>
    </location>
</feature>
<feature type="glycosylation site" description="N-linked (GlcNAc...) asparagine; by host" evidence="2">
    <location>
        <position position="599"/>
    </location>
</feature>
<feature type="glycosylation site" description="N-linked (GlcNAc...) asparagine; by host" evidence="2">
    <location>
        <position position="614"/>
    </location>
</feature>
<feature type="glycosylation site" description="N-linked (GlcNAc...) asparagine; by host" evidence="2">
    <location>
        <position position="628"/>
    </location>
</feature>
<feature type="disulfide bond" evidence="2">
    <location>
        <begin position="68"/>
        <end position="528"/>
    </location>
</feature>
<feature type="disulfide bond" evidence="2">
    <location>
        <begin position="85"/>
        <end position="484"/>
    </location>
</feature>
<feature type="disulfide bond" evidence="2">
    <location>
        <begin position="157"/>
        <end position="222"/>
    </location>
</feature>
<feature type="disulfide bond" evidence="2">
    <location>
        <begin position="315"/>
        <end position="362"/>
    </location>
</feature>
<feature type="disulfide bond" evidence="2">
    <location>
        <begin position="550"/>
        <end position="587"/>
    </location>
</feature>
<proteinExistence type="evidence at protein level"/>
<sequence>MTPRSRLATLGTVILLVCFCAGAAHSRGDTFQTSSSPTPPGSSSKAPTKPGEEASGPKSVDFYQFRVCSASITGELFRFNLEQTCPDTKDKYHQEGILLVYKKNIVPHIFKVRRYRKIATSVTVYRGLTESAITNKYELPRPVPLYEISHMDSTYQCFSSMKVNVNGVENTFTDRDDVNTTVFLQPVEGLTDNIQRYFSQPVIYAEPGWFPGIYRVRTTVNCEIVDMIARSAEPYNYFVTSLGDTVEVSPFCYNESSCSTTPSNKNGLSVQVVLNHTVVTYSDRGTSPTPQNRIFVETGAYTLSWASESKTTAVCPLALWKTFPRSIQTTHEDSFHFVANEITATFTAPLTPVANFTDTYSCLTSDINTTLNASKAKLASTHVPNGTVQYFHTTGGLYLVWQPMSAINLTHAQGDSGNPTSSPPPSASPMTTSASRRKRRSASTAAAGGGGSTDNLSYTQLQFAYDKLRDGINQVLEELSRAWCREQVRDNLMWYELSKINPTSVMTAIYGRPVSAKFVGDAISVTECINVDQSSVNIHKSLRTNSKDVCYARPLVTFKFLNSSNLFTGQLGARNEIILTNNQVETCKDTCEHYFITRNETLVYKDYAYLRTINTTDISTLNTFIALNLSFIQNIDFKAIELYSSAEKRLASSVFDLETMFREYNYYTHRLAGLREDLDNTIDMNKERFVRDLSEIVADLGGIGKTVVNVASSVVTLCGSLVTGFINFIKHPLGGMLMIIIVIAIILIIFMLSRRTNTIAQAPVKMIYPDVDRRAPPSGGAPTREEIKNILLGMHQLQQEERQKADDLKKSTPSVFQRTANGLRQRLRGYKPLTQSLDISPETGE</sequence>
<protein>
    <recommendedName>
        <fullName evidence="2">Envelope glycoprotein B</fullName>
        <shortName evidence="2">gB</shortName>
    </recommendedName>
</protein>
<organismHost>
    <name type="scientific">Homo sapiens</name>
    <name type="common">Human</name>
    <dbReference type="NCBI Taxonomy" id="9606"/>
</organismHost>
<comment type="function">
    <text evidence="4 5 6">Envelope glycoprotein that forms spikes at the surface of the virion envelope. Participates in viral entry through an RGD motif that binds ITGAV-ITGB3. Membrane fusion is mediated by the fusion machinery composed at least of gB and the heterodimer gH/gL. May be involved in the fusion between the virion envelope and the outer nuclear membrane during virion egress.</text>
</comment>
<comment type="subunit">
    <text evidence="1 2 6">Homotrimer; disulfide-linked. Binds to heparan sulfate proteoglycans. Interacts with gH/gL heterodimer (By similarity). Interacts with host ITGAV-ITGB3; this interaction mediates viral entry.</text>
</comment>
<comment type="interaction">
    <interactant intactId="EBI-9027696">
        <id>F5HB81</id>
    </interactant>
    <interactant intactId="EBI-702847">
        <id>P05106</id>
        <label>ITGB3</label>
    </interactant>
    <organismsDiffer>true</organismsDiffer>
    <experiments>2</experiments>
</comment>
<comment type="subcellular location">
    <subcellularLocation>
        <location evidence="2">Virion membrane</location>
        <topology evidence="2">Single-pass type I membrane protein</topology>
    </subcellularLocation>
    <subcellularLocation>
        <location evidence="2">Host cell membrane</location>
        <topology evidence="2">Single-pass type I membrane protein</topology>
    </subcellularLocation>
    <subcellularLocation>
        <location evidence="2">Host endosome membrane</location>
        <topology evidence="2">Single-pass type I membrane protein</topology>
    </subcellularLocation>
    <subcellularLocation>
        <location evidence="2">Host Golgi apparatus membrane</location>
        <topology evidence="2">Single-pass type I membrane protein</topology>
    </subcellularLocation>
    <text evidence="2">During virion morphogenesis, this protein probably accumulates in the endosomes and trans-Golgi where secondary envelopment occurs. It is probably transported to the cell surface from where it is endocytosed and directed to the trans-Golgi network (TGN).</text>
</comment>
<comment type="PTM">
    <text evidence="1">A proteolytic cleavage by host furin generates two subunits that remain linked by disulfide bonds.</text>
</comment>
<comment type="similarity">
    <text evidence="2">Belongs to the herpesviridae glycoprotein B family.</text>
</comment>
<organism>
    <name type="scientific">Human herpesvirus 8 type P (isolate GK18)</name>
    <name type="common">HHV-8</name>
    <name type="synonym">Kaposi's sarcoma-associated herpesvirus</name>
    <dbReference type="NCBI Taxonomy" id="868565"/>
    <lineage>
        <taxon>Viruses</taxon>
        <taxon>Duplodnaviria</taxon>
        <taxon>Heunggongvirae</taxon>
        <taxon>Peploviricota</taxon>
        <taxon>Herviviricetes</taxon>
        <taxon>Herpesvirales</taxon>
        <taxon>Orthoherpesviridae</taxon>
        <taxon>Gammaherpesvirinae</taxon>
        <taxon>Rhadinovirus</taxon>
        <taxon>Rhadinovirus humangamma8</taxon>
        <taxon>Human herpesvirus 8</taxon>
    </lineage>
</organism>
<name>GB_HHV8P</name>
<accession>F5HB81</accession>
<reference key="1">
    <citation type="journal article" date="1999" name="J. Virol.">
        <title>Identification of a spliced gene from Kaposi's sarcoma-associated herpesvirus encoding a protein with similarities to latent membrane proteins 1 and 2A of Epstein-Barr virus.</title>
        <authorList>
            <person name="Glenn M."/>
            <person name="Rainbow L."/>
            <person name="Aurade F."/>
            <person name="Davison A."/>
            <person name="Schulz T.F."/>
        </authorList>
    </citation>
    <scope>NUCLEOTIDE SEQUENCE [LARGE SCALE GENOMIC DNA]</scope>
</reference>
<reference key="2">
    <citation type="journal article" date="2006" name="J. Gen. Virol.">
        <title>Kaposi's sarcoma-associated herpesvirus immune modulation: an overview.</title>
        <authorList>
            <person name="Rezaee S.A.R."/>
            <person name="Cunningham C."/>
            <person name="Davison A.J."/>
            <person name="Blackbourn D.J."/>
        </authorList>
    </citation>
    <scope>NUCLEOTIDE SEQUENCE [LARGE SCALE GENOMIC DNA]</scope>
</reference>
<reference key="3">
    <citation type="journal article" date="2002" name="J. Virol.">
        <title>Human herpesvirus 8 glycoprotein B (gB), gH, and gL can mediate cell fusion.</title>
        <authorList>
            <person name="Pertel P.E."/>
        </authorList>
    </citation>
    <scope>FUNCTION IN FUSION</scope>
</reference>
<reference key="4">
    <citation type="journal article" date="2003" name="J. Virol.">
        <title>Human herpesvirus 8 envelope glycoprotein B mediates cell adhesion via its RGD sequence.</title>
        <authorList>
            <person name="Wang F.Z."/>
            <person name="Akula S.M."/>
            <person name="Sharma-Walia N."/>
            <person name="Zeng L."/>
            <person name="Chandran B."/>
        </authorList>
    </citation>
    <scope>FUNCTION</scope>
</reference>
<reference key="5">
    <citation type="journal article" date="2008" name="J. Virol.">
        <title>Integrin alphaVbeta3 Binds to the RGD motif of glycoprotein B of Kaposi's sarcoma-associated herpesvirus and functions as an RGD-dependent entry receptor.</title>
        <authorList>
            <person name="Garrigues H.J."/>
            <person name="Rubinchikova Y.E."/>
            <person name="Dipersio C.M."/>
            <person name="Rose T.M."/>
        </authorList>
    </citation>
    <scope>FUNCTION</scope>
    <scope>INTERACTION WITH HOST ITGAV AND ITGB3</scope>
</reference>
<keyword id="KW-0002">3D-structure</keyword>
<keyword id="KW-1015">Disulfide bond</keyword>
<keyword id="KW-0325">Glycoprotein</keyword>
<keyword id="KW-1032">Host cell membrane</keyword>
<keyword id="KW-1039">Host endosome</keyword>
<keyword id="KW-1040">Host Golgi apparatus</keyword>
<keyword id="KW-1043">Host membrane</keyword>
<keyword id="KW-0945">Host-virus interaction</keyword>
<keyword id="KW-0472">Membrane</keyword>
<keyword id="KW-1185">Reference proteome</keyword>
<keyword id="KW-0732">Signal</keyword>
<keyword id="KW-0812">Transmembrane</keyword>
<keyword id="KW-1133">Transmembrane helix</keyword>
<keyword id="KW-1161">Viral attachment to host cell</keyword>
<keyword id="KW-0261">Viral envelope protein</keyword>
<keyword id="KW-0946">Virion</keyword>
<keyword id="KW-1160">Virus entry into host cell</keyword>